<gene>
    <name type="primary">yme2</name>
    <name type="ORF">An07g09890</name>
</gene>
<proteinExistence type="inferred from homology"/>
<comment type="function">
    <text evidence="1">Plays a role in maintaining the mitochondrial genome and in controlling the mtDNA escape. Involved in the regulation of mtDNA nucleotide structure and number. May have a dispensable role in early maturation of pre-rRNA (By similarity).</text>
</comment>
<comment type="subcellular location">
    <subcellularLocation>
        <location evidence="1">Mitochondrion inner membrane</location>
        <topology evidence="1">Single-pass membrane protein</topology>
    </subcellularLocation>
</comment>
<comment type="similarity">
    <text evidence="4">Belongs to the YME2 family.</text>
</comment>
<organism>
    <name type="scientific">Aspergillus niger (strain ATCC MYA-4892 / CBS 513.88 / FGSC A1513)</name>
    <dbReference type="NCBI Taxonomy" id="425011"/>
    <lineage>
        <taxon>Eukaryota</taxon>
        <taxon>Fungi</taxon>
        <taxon>Dikarya</taxon>
        <taxon>Ascomycota</taxon>
        <taxon>Pezizomycotina</taxon>
        <taxon>Eurotiomycetes</taxon>
        <taxon>Eurotiomycetidae</taxon>
        <taxon>Eurotiales</taxon>
        <taxon>Aspergillaceae</taxon>
        <taxon>Aspergillus</taxon>
        <taxon>Aspergillus subgen. Circumdati</taxon>
    </lineage>
</organism>
<keyword id="KW-0175">Coiled coil</keyword>
<keyword id="KW-0472">Membrane</keyword>
<keyword id="KW-0496">Mitochondrion</keyword>
<keyword id="KW-0999">Mitochondrion inner membrane</keyword>
<keyword id="KW-0507">mRNA processing</keyword>
<keyword id="KW-1185">Reference proteome</keyword>
<keyword id="KW-0694">RNA-binding</keyword>
<keyword id="KW-0809">Transit peptide</keyword>
<keyword id="KW-0812">Transmembrane</keyword>
<keyword id="KW-1133">Transmembrane helix</keyword>
<dbReference type="EMBL" id="AM270154">
    <property type="protein sequence ID" value="CAK39755.1"/>
    <property type="molecule type" value="Genomic_DNA"/>
</dbReference>
<dbReference type="RefSeq" id="XP_001392064.1">
    <property type="nucleotide sequence ID" value="XM_001392027.1"/>
</dbReference>
<dbReference type="EnsemblFungi" id="CAK39755">
    <property type="protein sequence ID" value="CAK39755"/>
    <property type="gene ID" value="An07g09890"/>
</dbReference>
<dbReference type="GeneID" id="4982258"/>
<dbReference type="KEGG" id="ang:An07g09890"/>
<dbReference type="VEuPathDB" id="FungiDB:An07g09890"/>
<dbReference type="HOGENOM" id="CLU_007861_1_0_1"/>
<dbReference type="Proteomes" id="UP000006706">
    <property type="component" value="Chromosome 4L"/>
</dbReference>
<dbReference type="GO" id="GO:0005743">
    <property type="term" value="C:mitochondrial inner membrane"/>
    <property type="evidence" value="ECO:0007669"/>
    <property type="project" value="UniProtKB-SubCell"/>
</dbReference>
<dbReference type="GO" id="GO:0003723">
    <property type="term" value="F:RNA binding"/>
    <property type="evidence" value="ECO:0007669"/>
    <property type="project" value="UniProtKB-KW"/>
</dbReference>
<dbReference type="GO" id="GO:0000002">
    <property type="term" value="P:mitochondrial genome maintenance"/>
    <property type="evidence" value="ECO:0007669"/>
    <property type="project" value="InterPro"/>
</dbReference>
<dbReference type="GO" id="GO:0006397">
    <property type="term" value="P:mRNA processing"/>
    <property type="evidence" value="ECO:0007669"/>
    <property type="project" value="UniProtKB-KW"/>
</dbReference>
<dbReference type="CDD" id="cd12433">
    <property type="entry name" value="RRM_Yme2p_like"/>
    <property type="match status" value="1"/>
</dbReference>
<dbReference type="FunFam" id="3.30.70.330:FF:000959">
    <property type="entry name" value="Mitochondrial escape protein 2"/>
    <property type="match status" value="1"/>
</dbReference>
<dbReference type="Gene3D" id="3.30.70.330">
    <property type="match status" value="1"/>
</dbReference>
<dbReference type="Gene3D" id="3.40.50.300">
    <property type="entry name" value="P-loop containing nucleotide triphosphate hydrolases"/>
    <property type="match status" value="1"/>
</dbReference>
<dbReference type="InterPro" id="IPR018850">
    <property type="entry name" value="Mt_escape_2_C"/>
</dbReference>
<dbReference type="InterPro" id="IPR012677">
    <property type="entry name" value="Nucleotide-bd_a/b_plait_sf"/>
</dbReference>
<dbReference type="InterPro" id="IPR027417">
    <property type="entry name" value="P-loop_NTPase"/>
</dbReference>
<dbReference type="InterPro" id="IPR035979">
    <property type="entry name" value="RBD_domain_sf"/>
</dbReference>
<dbReference type="InterPro" id="IPR000504">
    <property type="entry name" value="RRM_dom"/>
</dbReference>
<dbReference type="InterPro" id="IPR039627">
    <property type="entry name" value="Yme2_C"/>
</dbReference>
<dbReference type="InterPro" id="IPR034260">
    <property type="entry name" value="Yme2_RRM"/>
</dbReference>
<dbReference type="PANTHER" id="PTHR32198">
    <property type="entry name" value="MITOCHONDRIAL ESCAPE PROTEIN 2"/>
    <property type="match status" value="1"/>
</dbReference>
<dbReference type="PANTHER" id="PTHR32198:SF2">
    <property type="entry name" value="MITOCHONDRIAL ESCAPE PROTEIN 2"/>
    <property type="match status" value="1"/>
</dbReference>
<dbReference type="Pfam" id="PF10443">
    <property type="entry name" value="RNA12"/>
    <property type="match status" value="1"/>
</dbReference>
<dbReference type="Pfam" id="PF00076">
    <property type="entry name" value="RRM_1"/>
    <property type="match status" value="1"/>
</dbReference>
<dbReference type="SUPFAM" id="SSF54928">
    <property type="entry name" value="RNA-binding domain, RBD"/>
    <property type="match status" value="1"/>
</dbReference>
<dbReference type="PROSITE" id="PS50102">
    <property type="entry name" value="RRM"/>
    <property type="match status" value="1"/>
</dbReference>
<feature type="transit peptide" description="Mitochondrion" evidence="2">
    <location>
        <begin position="1"/>
        <end position="40"/>
    </location>
</feature>
<feature type="chain" id="PRO_0000343114" description="Mitochondrial escape protein 2">
    <location>
        <begin position="41"/>
        <end position="832"/>
    </location>
</feature>
<feature type="topological domain" description="Mitochondrial matrix" evidence="2">
    <location>
        <begin position="41"/>
        <end position="294"/>
    </location>
</feature>
<feature type="transmembrane region" description="Helical" evidence="2">
    <location>
        <begin position="295"/>
        <end position="315"/>
    </location>
</feature>
<feature type="topological domain" description="Mitochondrial intermembrane" evidence="2">
    <location>
        <begin position="316"/>
        <end position="832"/>
    </location>
</feature>
<feature type="domain" description="RRM" evidence="3">
    <location>
        <begin position="187"/>
        <end position="279"/>
    </location>
</feature>
<feature type="coiled-coil region" evidence="2">
    <location>
        <begin position="766"/>
        <end position="831"/>
    </location>
</feature>
<evidence type="ECO:0000250" key="1"/>
<evidence type="ECO:0000255" key="2"/>
<evidence type="ECO:0000255" key="3">
    <source>
        <dbReference type="PROSITE-ProRule" id="PRU00176"/>
    </source>
</evidence>
<evidence type="ECO:0000305" key="4"/>
<name>YME2_ASPNC</name>
<protein>
    <recommendedName>
        <fullName>Mitochondrial escape protein 2</fullName>
    </recommendedName>
</protein>
<sequence>MMRIPYRAVVPRATLLHARFSRPPAVPSLTKAFIVSRRTSSHASFIETGHIDVKDDEGLVFVNNIFPSKLQWLLQGPLSGNKTYEEALKRINRPHLAASDPLHIIRRVFPQSLNVDIREVIPRFREGGAFVKYVRKDGVRDNDIVTAVQHHLEHNPIRPWFNPFQQVKVAHVHGRPWIEDLYRIPSQRLRVEFLPGSVDGAATELTTETLYSFFRRYGKLRDIERQPTDSKIAPRYAFVSFTRQKYAVMAKNCMHGFTIPEEEGGGKSGTRIKIKYERKIKFSVIKDWILNHPRIVIPAIAALIAAITVTIFDPIRTFFIEMKIKATLQTEENSVLQWIRNQANKANIIYFGRQRTDPRRLTAIWEDRQGDIKQLQSWLMENAETFIVIHGPRGTGKRELVLDRALENYKYKVVIDCKQIQDAKGDTAKIARAASQVGYRPVFSWMNSMSSFIDLAAQGMIGTKAGFSETLDAQLSKIWQNTATALKRVALSNRKKDDKEAHLSDEEYLEAHPEQRPVVVIDNFLHNATESSVVYDKITEWAAGLTTGNIAHVVFLTTDVSFSKPLSKALPNSVFRTISLGDCSLDVGRKFVLSHLEHGAKDGANSGQNMEEVGDLGTLDSCIEVLGGRVTDLEFMARRIESGETPRAAVNRIIEQSASEILKMFVFDPDIESKQWSHEQAWHLIKTLAHSQDGTLPYNQVLLSDLFKENGETTLRALEQAELIAISSVNGCPDAVKPGKPVYRAVFKRLTENKTLSSRLDLDIVKQLLSSENKSIGKYEQELQVLGSLPKQPRELSARIQWLLQKVASSQNKISQYEHESAILQKVLRREH</sequence>
<reference key="1">
    <citation type="journal article" date="2007" name="Nat. Biotechnol.">
        <title>Genome sequencing and analysis of the versatile cell factory Aspergillus niger CBS 513.88.</title>
        <authorList>
            <person name="Pel H.J."/>
            <person name="de Winde J.H."/>
            <person name="Archer D.B."/>
            <person name="Dyer P.S."/>
            <person name="Hofmann G."/>
            <person name="Schaap P.J."/>
            <person name="Turner G."/>
            <person name="de Vries R.P."/>
            <person name="Albang R."/>
            <person name="Albermann K."/>
            <person name="Andersen M.R."/>
            <person name="Bendtsen J.D."/>
            <person name="Benen J.A.E."/>
            <person name="van den Berg M."/>
            <person name="Breestraat S."/>
            <person name="Caddick M.X."/>
            <person name="Contreras R."/>
            <person name="Cornell M."/>
            <person name="Coutinho P.M."/>
            <person name="Danchin E.G.J."/>
            <person name="Debets A.J.M."/>
            <person name="Dekker P."/>
            <person name="van Dijck P.W.M."/>
            <person name="van Dijk A."/>
            <person name="Dijkhuizen L."/>
            <person name="Driessen A.J.M."/>
            <person name="d'Enfert C."/>
            <person name="Geysens S."/>
            <person name="Goosen C."/>
            <person name="Groot G.S.P."/>
            <person name="de Groot P.W.J."/>
            <person name="Guillemette T."/>
            <person name="Henrissat B."/>
            <person name="Herweijer M."/>
            <person name="van den Hombergh J.P.T.W."/>
            <person name="van den Hondel C.A.M.J.J."/>
            <person name="van der Heijden R.T.J.M."/>
            <person name="van der Kaaij R.M."/>
            <person name="Klis F.M."/>
            <person name="Kools H.J."/>
            <person name="Kubicek C.P."/>
            <person name="van Kuyk P.A."/>
            <person name="Lauber J."/>
            <person name="Lu X."/>
            <person name="van der Maarel M.J.E.C."/>
            <person name="Meulenberg R."/>
            <person name="Menke H."/>
            <person name="Mortimer M.A."/>
            <person name="Nielsen J."/>
            <person name="Oliver S.G."/>
            <person name="Olsthoorn M."/>
            <person name="Pal K."/>
            <person name="van Peij N.N.M.E."/>
            <person name="Ram A.F.J."/>
            <person name="Rinas U."/>
            <person name="Roubos J.A."/>
            <person name="Sagt C.M.J."/>
            <person name="Schmoll M."/>
            <person name="Sun J."/>
            <person name="Ussery D."/>
            <person name="Varga J."/>
            <person name="Vervecken W."/>
            <person name="van de Vondervoort P.J.J."/>
            <person name="Wedler H."/>
            <person name="Woesten H.A.B."/>
            <person name="Zeng A.-P."/>
            <person name="van Ooyen A.J.J."/>
            <person name="Visser J."/>
            <person name="Stam H."/>
        </authorList>
    </citation>
    <scope>NUCLEOTIDE SEQUENCE [LARGE SCALE GENOMIC DNA]</scope>
    <source>
        <strain>ATCC MYA-4892 / CBS 513.88 / FGSC A1513</strain>
    </source>
</reference>
<accession>A2QPL8</accession>